<name>MED4_CANAL</name>
<keyword id="KW-0010">Activator</keyword>
<keyword id="KW-0175">Coiled coil</keyword>
<keyword id="KW-0539">Nucleus</keyword>
<keyword id="KW-1185">Reference proteome</keyword>
<keyword id="KW-0804">Transcription</keyword>
<keyword id="KW-0805">Transcription regulation</keyword>
<feature type="chain" id="PRO_0000302073" description="Mediator of RNA polymerase II transcription subunit 4">
    <location>
        <begin position="1"/>
        <end position="323"/>
    </location>
</feature>
<feature type="region of interest" description="Disordered" evidence="3">
    <location>
        <begin position="1"/>
        <end position="36"/>
    </location>
</feature>
<feature type="region of interest" description="Disordered" evidence="3">
    <location>
        <begin position="241"/>
        <end position="323"/>
    </location>
</feature>
<feature type="coiled-coil region" evidence="2">
    <location>
        <begin position="79"/>
        <end position="167"/>
    </location>
</feature>
<feature type="compositionally biased region" description="Polar residues" evidence="3">
    <location>
        <begin position="11"/>
        <end position="36"/>
    </location>
</feature>
<feature type="compositionally biased region" description="Basic and acidic residues" evidence="3">
    <location>
        <begin position="241"/>
        <end position="262"/>
    </location>
</feature>
<feature type="compositionally biased region" description="Basic and acidic residues" evidence="3">
    <location>
        <begin position="282"/>
        <end position="303"/>
    </location>
</feature>
<gene>
    <name type="primary">MED4</name>
    <name type="ordered locus">CAALFM_C207500CA</name>
    <name type="ORF">CaO19.1878</name>
    <name type="ORF">CaO19.9434</name>
</gene>
<comment type="function">
    <text evidence="1">Component of the Mediator complex, a coactivator involved in the regulated transcription of nearly all RNA polymerase II-dependent genes. Mediator functions as a bridge to convey information from gene-specific regulatory proteins to the basal RNA polymerase II transcription machinery. Mediator is recruited to promoters by direct interactions with regulatory proteins and serves as a scaffold for the assembly of a functional preinitiation complex with RNA polymerase II and the general transcription factors (By similarity).</text>
</comment>
<comment type="subunit">
    <text evidence="1">Component of the Mediator complex.</text>
</comment>
<comment type="subcellular location">
    <subcellularLocation>
        <location evidence="1">Nucleus</location>
    </subcellularLocation>
</comment>
<comment type="similarity">
    <text evidence="4">Belongs to the Mediator complex subunit 4 family.</text>
</comment>
<proteinExistence type="inferred from homology"/>
<accession>Q59U73</accession>
<accession>A0A1D8PHX4</accession>
<sequence length="323" mass="37008">MLPFKKADSPFKSNPVSRVGSSTRLNQLGNIKSNPTTPNAALYVTSSLNPSKNLPTNAANVKSRLQTQKDLDAFKQLPMVQKVNEYERLLNELSEAVSQFKNDELQEKIGQIITCNDVLKQQIEDLNKHRNYSYEVDKLSDRNKILEENSKFILKELVSYRNELKKLPKLPKSDKMVNRNVDVDDILKYAFKLAKFTKAPATVANMPFQIHPNNYVWPAEDSLRRGMLAQASLQAEEIIRHELGETDKENSNEVKTESKVDHDDDDDDEMEDVRISNENTNDEQRSKPPAASEHDTSKRKEEQNQQPVDLNLDLFDPDDEYSD</sequence>
<organism>
    <name type="scientific">Candida albicans (strain SC5314 / ATCC MYA-2876)</name>
    <name type="common">Yeast</name>
    <dbReference type="NCBI Taxonomy" id="237561"/>
    <lineage>
        <taxon>Eukaryota</taxon>
        <taxon>Fungi</taxon>
        <taxon>Dikarya</taxon>
        <taxon>Ascomycota</taxon>
        <taxon>Saccharomycotina</taxon>
        <taxon>Pichiomycetes</taxon>
        <taxon>Debaryomycetaceae</taxon>
        <taxon>Candida/Lodderomyces clade</taxon>
        <taxon>Candida</taxon>
    </lineage>
</organism>
<dbReference type="EMBL" id="CP017624">
    <property type="protein sequence ID" value="AOW27748.1"/>
    <property type="molecule type" value="Genomic_DNA"/>
</dbReference>
<dbReference type="RefSeq" id="XP_713135.2">
    <property type="nucleotide sequence ID" value="XM_708042.2"/>
</dbReference>
<dbReference type="SMR" id="Q59U73"/>
<dbReference type="BioGRID" id="1228243">
    <property type="interactions" value="2"/>
</dbReference>
<dbReference type="FunCoup" id="Q59U73">
    <property type="interactions" value="277"/>
</dbReference>
<dbReference type="STRING" id="237561.Q59U73"/>
<dbReference type="EnsemblFungi" id="C2_07500C_A-T">
    <property type="protein sequence ID" value="C2_07500C_A-T-p1"/>
    <property type="gene ID" value="C2_07500C_A"/>
</dbReference>
<dbReference type="GeneID" id="3645209"/>
<dbReference type="KEGG" id="cal:CAALFM_C207500CA"/>
<dbReference type="CGD" id="CAL0000181311">
    <property type="gene designation" value="MED4"/>
</dbReference>
<dbReference type="VEuPathDB" id="FungiDB:C2_07500C_A"/>
<dbReference type="eggNOG" id="ENOG502RXM0">
    <property type="taxonomic scope" value="Eukaryota"/>
</dbReference>
<dbReference type="HOGENOM" id="CLU_071875_0_0_1"/>
<dbReference type="InParanoid" id="Q59U73"/>
<dbReference type="OrthoDB" id="1929813at2759"/>
<dbReference type="PRO" id="PR:Q59U73"/>
<dbReference type="Proteomes" id="UP000000559">
    <property type="component" value="Chromosome 2"/>
</dbReference>
<dbReference type="GO" id="GO:0070847">
    <property type="term" value="C:core mediator complex"/>
    <property type="evidence" value="ECO:0000318"/>
    <property type="project" value="GO_Central"/>
</dbReference>
<dbReference type="GO" id="GO:0016592">
    <property type="term" value="C:mediator complex"/>
    <property type="evidence" value="ECO:0007669"/>
    <property type="project" value="InterPro"/>
</dbReference>
<dbReference type="GO" id="GO:0003712">
    <property type="term" value="F:transcription coregulator activity"/>
    <property type="evidence" value="ECO:0000318"/>
    <property type="project" value="GO_Central"/>
</dbReference>
<dbReference type="GO" id="GO:0006357">
    <property type="term" value="P:regulation of transcription by RNA polymerase II"/>
    <property type="evidence" value="ECO:0000318"/>
    <property type="project" value="GO_Central"/>
</dbReference>
<dbReference type="InterPro" id="IPR019258">
    <property type="entry name" value="Mediator_Med4"/>
</dbReference>
<dbReference type="PANTHER" id="PTHR13208">
    <property type="entry name" value="MEDIATOR OF RNA POLYMERASE II TRANSCRIPTION SUBUNIT 4"/>
    <property type="match status" value="1"/>
</dbReference>
<dbReference type="PANTHER" id="PTHR13208:SF2">
    <property type="entry name" value="MEDIATOR OF RNA POLYMERASE II TRANSCRIPTION SUBUNIT 4"/>
    <property type="match status" value="1"/>
</dbReference>
<dbReference type="Pfam" id="PF10018">
    <property type="entry name" value="Med4"/>
    <property type="match status" value="1"/>
</dbReference>
<evidence type="ECO:0000250" key="1"/>
<evidence type="ECO:0000255" key="2"/>
<evidence type="ECO:0000256" key="3">
    <source>
        <dbReference type="SAM" id="MobiDB-lite"/>
    </source>
</evidence>
<evidence type="ECO:0000305" key="4"/>
<reference key="1">
    <citation type="journal article" date="2004" name="Proc. Natl. Acad. Sci. U.S.A.">
        <title>The diploid genome sequence of Candida albicans.</title>
        <authorList>
            <person name="Jones T."/>
            <person name="Federspiel N.A."/>
            <person name="Chibana H."/>
            <person name="Dungan J."/>
            <person name="Kalman S."/>
            <person name="Magee B.B."/>
            <person name="Newport G."/>
            <person name="Thorstenson Y.R."/>
            <person name="Agabian N."/>
            <person name="Magee P.T."/>
            <person name="Davis R.W."/>
            <person name="Scherer S."/>
        </authorList>
    </citation>
    <scope>NUCLEOTIDE SEQUENCE [LARGE SCALE GENOMIC DNA]</scope>
    <source>
        <strain>SC5314 / ATCC MYA-2876</strain>
    </source>
</reference>
<reference key="2">
    <citation type="journal article" date="2007" name="Genome Biol.">
        <title>Assembly of the Candida albicans genome into sixteen supercontigs aligned on the eight chromosomes.</title>
        <authorList>
            <person name="van het Hoog M."/>
            <person name="Rast T.J."/>
            <person name="Martchenko M."/>
            <person name="Grindle S."/>
            <person name="Dignard D."/>
            <person name="Hogues H."/>
            <person name="Cuomo C."/>
            <person name="Berriman M."/>
            <person name="Scherer S."/>
            <person name="Magee B.B."/>
            <person name="Whiteway M."/>
            <person name="Chibana H."/>
            <person name="Nantel A."/>
            <person name="Magee P.T."/>
        </authorList>
    </citation>
    <scope>GENOME REANNOTATION</scope>
    <source>
        <strain>SC5314 / ATCC MYA-2876</strain>
    </source>
</reference>
<reference key="3">
    <citation type="journal article" date="2013" name="Genome Biol.">
        <title>Assembly of a phased diploid Candida albicans genome facilitates allele-specific measurements and provides a simple model for repeat and indel structure.</title>
        <authorList>
            <person name="Muzzey D."/>
            <person name="Schwartz K."/>
            <person name="Weissman J.S."/>
            <person name="Sherlock G."/>
        </authorList>
    </citation>
    <scope>NUCLEOTIDE SEQUENCE [LARGE SCALE GENOMIC DNA]</scope>
    <scope>GENOME REANNOTATION</scope>
    <source>
        <strain>SC5314 / ATCC MYA-2876</strain>
    </source>
</reference>
<protein>
    <recommendedName>
        <fullName>Mediator of RNA polymerase II transcription subunit 4</fullName>
    </recommendedName>
    <alternativeName>
        <fullName>Mediator complex subunit 4</fullName>
    </alternativeName>
</protein>